<dbReference type="EMBL" id="AM263198">
    <property type="protein sequence ID" value="CAK20934.1"/>
    <property type="molecule type" value="Genomic_DNA"/>
</dbReference>
<dbReference type="RefSeq" id="WP_011702306.1">
    <property type="nucleotide sequence ID" value="NC_008555.1"/>
</dbReference>
<dbReference type="SMR" id="A0AIV2"/>
<dbReference type="STRING" id="386043.lwe1516"/>
<dbReference type="GeneID" id="61189392"/>
<dbReference type="KEGG" id="lwe:lwe1516"/>
<dbReference type="eggNOG" id="COG4472">
    <property type="taxonomic scope" value="Bacteria"/>
</dbReference>
<dbReference type="HOGENOM" id="CLU_162466_0_0_9"/>
<dbReference type="OrthoDB" id="9796303at2"/>
<dbReference type="Proteomes" id="UP000000779">
    <property type="component" value="Chromosome"/>
</dbReference>
<dbReference type="HAMAP" id="MF_01507">
    <property type="entry name" value="UPF0297"/>
    <property type="match status" value="1"/>
</dbReference>
<dbReference type="InterPro" id="IPR009309">
    <property type="entry name" value="IreB"/>
</dbReference>
<dbReference type="NCBIfam" id="NF003997">
    <property type="entry name" value="PRK05473.1"/>
    <property type="match status" value="1"/>
</dbReference>
<dbReference type="PANTHER" id="PTHR40067">
    <property type="entry name" value="UPF0297 PROTEIN YRZL"/>
    <property type="match status" value="1"/>
</dbReference>
<dbReference type="PANTHER" id="PTHR40067:SF1">
    <property type="entry name" value="UPF0297 PROTEIN YRZL"/>
    <property type="match status" value="1"/>
</dbReference>
<dbReference type="Pfam" id="PF06135">
    <property type="entry name" value="IreB"/>
    <property type="match status" value="1"/>
</dbReference>
<dbReference type="PIRSF" id="PIRSF037258">
    <property type="entry name" value="DUF965_bac"/>
    <property type="match status" value="1"/>
</dbReference>
<evidence type="ECO:0000255" key="1">
    <source>
        <dbReference type="HAMAP-Rule" id="MF_01507"/>
    </source>
</evidence>
<feature type="chain" id="PRO_0000289308" description="UPF0297 protein lwe1516">
    <location>
        <begin position="1"/>
        <end position="90"/>
    </location>
</feature>
<comment type="similarity">
    <text evidence="1">Belongs to the UPF0297 family.</text>
</comment>
<protein>
    <recommendedName>
        <fullName evidence="1">UPF0297 protein lwe1516</fullName>
    </recommendedName>
</protein>
<reference key="1">
    <citation type="journal article" date="2006" name="J. Bacteriol.">
        <title>Whole-genome sequence of Listeria welshimeri reveals common steps in genome reduction with Listeria innocua as compared to Listeria monocytogenes.</title>
        <authorList>
            <person name="Hain T."/>
            <person name="Steinweg C."/>
            <person name="Kuenne C.T."/>
            <person name="Billion A."/>
            <person name="Ghai R."/>
            <person name="Chatterjee S.S."/>
            <person name="Domann E."/>
            <person name="Kaerst U."/>
            <person name="Goesmann A."/>
            <person name="Bekel T."/>
            <person name="Bartels D."/>
            <person name="Kaiser O."/>
            <person name="Meyer F."/>
            <person name="Puehler A."/>
            <person name="Weisshaar B."/>
            <person name="Wehland J."/>
            <person name="Liang C."/>
            <person name="Dandekar T."/>
            <person name="Lampidis R."/>
            <person name="Kreft J."/>
            <person name="Goebel W."/>
            <person name="Chakraborty T."/>
        </authorList>
    </citation>
    <scope>NUCLEOTIDE SEQUENCE [LARGE SCALE GENOMIC DNA]</scope>
    <source>
        <strain>ATCC 35897 / DSM 20650 / CCUG 15529 / CIP 8149 / NCTC 11857 / SLCC 5334 / V8</strain>
    </source>
</reference>
<name>Y1516_LISW6</name>
<gene>
    <name type="ordered locus">lwe1516</name>
</gene>
<proteinExistence type="inferred from homology"/>
<accession>A0AIV2</accession>
<organism>
    <name type="scientific">Listeria welshimeri serovar 6b (strain ATCC 35897 / DSM 20650 / CCUG 15529 / CIP 8149 / NCTC 11857 / SLCC 5334 / V8)</name>
    <dbReference type="NCBI Taxonomy" id="386043"/>
    <lineage>
        <taxon>Bacteria</taxon>
        <taxon>Bacillati</taxon>
        <taxon>Bacillota</taxon>
        <taxon>Bacilli</taxon>
        <taxon>Bacillales</taxon>
        <taxon>Listeriaceae</taxon>
        <taxon>Listeria</taxon>
    </lineage>
</organism>
<sequence length="90" mass="10526">MDSKDQTMFYNFGDDSIEEDVKKLMKQVYVALEEKGYNPVNQIVGYLLSGDPAYIPRHKDARSLIRRLERDEIIEELVKAYLKNNEIGEK</sequence>